<name>RLME_ERYLH</name>
<protein>
    <recommendedName>
        <fullName evidence="1">Ribosomal RNA large subunit methyltransferase E</fullName>
        <ecNumber evidence="1">2.1.1.166</ecNumber>
    </recommendedName>
    <alternativeName>
        <fullName evidence="1">23S rRNA Um2552 methyltransferase</fullName>
    </alternativeName>
    <alternativeName>
        <fullName evidence="1">rRNA (uridine-2'-O-)-methyltransferase</fullName>
    </alternativeName>
</protein>
<organism>
    <name type="scientific">Erythrobacter litoralis (strain HTCC2594)</name>
    <dbReference type="NCBI Taxonomy" id="314225"/>
    <lineage>
        <taxon>Bacteria</taxon>
        <taxon>Pseudomonadati</taxon>
        <taxon>Pseudomonadota</taxon>
        <taxon>Alphaproteobacteria</taxon>
        <taxon>Sphingomonadales</taxon>
        <taxon>Erythrobacteraceae</taxon>
        <taxon>Erythrobacter/Porphyrobacter group</taxon>
        <taxon>Erythrobacter</taxon>
    </lineage>
</organism>
<sequence>MSRSGKDPGKRVKTARKRSASSTRWLERQLNDPYVKQAKADGYRSRAAYKLIELDGKFGILKGASRVVDLGIAPGGWAQVVRKVRPKAGIVGIDLLETEPIEGVTILQMDFMADEAPAGLEAALDGPPDLVMSDMAANTVGHKQTDHLRTMGLVEAAAWFAIETLEEGGTFLAKVLAGGTDNDLLKLLKSHFKTVKHAKPPASRKGSSEWYVVAQGFKGR</sequence>
<evidence type="ECO:0000255" key="1">
    <source>
        <dbReference type="HAMAP-Rule" id="MF_01547"/>
    </source>
</evidence>
<evidence type="ECO:0000256" key="2">
    <source>
        <dbReference type="SAM" id="MobiDB-lite"/>
    </source>
</evidence>
<comment type="function">
    <text evidence="1">Specifically methylates the uridine in position 2552 of 23S rRNA at the 2'-O position of the ribose in the fully assembled 50S ribosomal subunit.</text>
</comment>
<comment type="catalytic activity">
    <reaction evidence="1">
        <text>uridine(2552) in 23S rRNA + S-adenosyl-L-methionine = 2'-O-methyluridine(2552) in 23S rRNA + S-adenosyl-L-homocysteine + H(+)</text>
        <dbReference type="Rhea" id="RHEA:42720"/>
        <dbReference type="Rhea" id="RHEA-COMP:10202"/>
        <dbReference type="Rhea" id="RHEA-COMP:10203"/>
        <dbReference type="ChEBI" id="CHEBI:15378"/>
        <dbReference type="ChEBI" id="CHEBI:57856"/>
        <dbReference type="ChEBI" id="CHEBI:59789"/>
        <dbReference type="ChEBI" id="CHEBI:65315"/>
        <dbReference type="ChEBI" id="CHEBI:74478"/>
        <dbReference type="EC" id="2.1.1.166"/>
    </reaction>
</comment>
<comment type="subcellular location">
    <subcellularLocation>
        <location evidence="1">Cytoplasm</location>
    </subcellularLocation>
</comment>
<comment type="similarity">
    <text evidence="1">Belongs to the class I-like SAM-binding methyltransferase superfamily. RNA methyltransferase RlmE family.</text>
</comment>
<feature type="chain" id="PRO_0000282742" description="Ribosomal RNA large subunit methyltransferase E">
    <location>
        <begin position="1"/>
        <end position="220"/>
    </location>
</feature>
<feature type="region of interest" description="Disordered" evidence="2">
    <location>
        <begin position="1"/>
        <end position="24"/>
    </location>
</feature>
<feature type="compositionally biased region" description="Basic and acidic residues" evidence="2">
    <location>
        <begin position="1"/>
        <end position="10"/>
    </location>
</feature>
<feature type="active site" description="Proton acceptor" evidence="1">
    <location>
        <position position="174"/>
    </location>
</feature>
<feature type="binding site" evidence="1">
    <location>
        <position position="75"/>
    </location>
    <ligand>
        <name>S-adenosyl-L-methionine</name>
        <dbReference type="ChEBI" id="CHEBI:59789"/>
    </ligand>
</feature>
<feature type="binding site" evidence="1">
    <location>
        <position position="77"/>
    </location>
    <ligand>
        <name>S-adenosyl-L-methionine</name>
        <dbReference type="ChEBI" id="CHEBI:59789"/>
    </ligand>
</feature>
<feature type="binding site" evidence="1">
    <location>
        <position position="94"/>
    </location>
    <ligand>
        <name>S-adenosyl-L-methionine</name>
        <dbReference type="ChEBI" id="CHEBI:59789"/>
    </ligand>
</feature>
<feature type="binding site" evidence="1">
    <location>
        <position position="110"/>
    </location>
    <ligand>
        <name>S-adenosyl-L-methionine</name>
        <dbReference type="ChEBI" id="CHEBI:59789"/>
    </ligand>
</feature>
<feature type="binding site" evidence="1">
    <location>
        <position position="134"/>
    </location>
    <ligand>
        <name>S-adenosyl-L-methionine</name>
        <dbReference type="ChEBI" id="CHEBI:59789"/>
    </ligand>
</feature>
<gene>
    <name evidence="1" type="primary">rlmE</name>
    <name evidence="1" type="synonym">ftsJ</name>
    <name evidence="1" type="synonym">rrmJ</name>
    <name type="ordered locus">ELI_10280</name>
</gene>
<dbReference type="EC" id="2.1.1.166" evidence="1"/>
<dbReference type="EMBL" id="CP000157">
    <property type="protein sequence ID" value="ABC64148.1"/>
    <property type="molecule type" value="Genomic_DNA"/>
</dbReference>
<dbReference type="RefSeq" id="WP_011414975.1">
    <property type="nucleotide sequence ID" value="NC_007722.1"/>
</dbReference>
<dbReference type="SMR" id="Q2N843"/>
<dbReference type="STRING" id="314225.ELI_10280"/>
<dbReference type="KEGG" id="eli:ELI_10280"/>
<dbReference type="eggNOG" id="COG0293">
    <property type="taxonomic scope" value="Bacteria"/>
</dbReference>
<dbReference type="HOGENOM" id="CLU_009422_4_0_5"/>
<dbReference type="OrthoDB" id="9790080at2"/>
<dbReference type="Proteomes" id="UP000008808">
    <property type="component" value="Chromosome"/>
</dbReference>
<dbReference type="GO" id="GO:0005737">
    <property type="term" value="C:cytoplasm"/>
    <property type="evidence" value="ECO:0007669"/>
    <property type="project" value="UniProtKB-SubCell"/>
</dbReference>
<dbReference type="GO" id="GO:0008650">
    <property type="term" value="F:rRNA (uridine-2'-O-)-methyltransferase activity"/>
    <property type="evidence" value="ECO:0007669"/>
    <property type="project" value="UniProtKB-UniRule"/>
</dbReference>
<dbReference type="Gene3D" id="3.40.50.150">
    <property type="entry name" value="Vaccinia Virus protein VP39"/>
    <property type="match status" value="1"/>
</dbReference>
<dbReference type="HAMAP" id="MF_01547">
    <property type="entry name" value="RNA_methyltr_E"/>
    <property type="match status" value="1"/>
</dbReference>
<dbReference type="InterPro" id="IPR050082">
    <property type="entry name" value="RNA_methyltr_RlmE"/>
</dbReference>
<dbReference type="InterPro" id="IPR002877">
    <property type="entry name" value="RNA_MeTrfase_FtsJ_dom"/>
</dbReference>
<dbReference type="InterPro" id="IPR015507">
    <property type="entry name" value="rRNA-MeTfrase_E"/>
</dbReference>
<dbReference type="InterPro" id="IPR029063">
    <property type="entry name" value="SAM-dependent_MTases_sf"/>
</dbReference>
<dbReference type="PANTHER" id="PTHR10920">
    <property type="entry name" value="RIBOSOMAL RNA METHYLTRANSFERASE"/>
    <property type="match status" value="1"/>
</dbReference>
<dbReference type="PANTHER" id="PTHR10920:SF18">
    <property type="entry name" value="RRNA METHYLTRANSFERASE 2, MITOCHONDRIAL"/>
    <property type="match status" value="1"/>
</dbReference>
<dbReference type="Pfam" id="PF01728">
    <property type="entry name" value="FtsJ"/>
    <property type="match status" value="1"/>
</dbReference>
<dbReference type="PIRSF" id="PIRSF005461">
    <property type="entry name" value="23S_rRNA_mtase"/>
    <property type="match status" value="1"/>
</dbReference>
<dbReference type="SUPFAM" id="SSF53335">
    <property type="entry name" value="S-adenosyl-L-methionine-dependent methyltransferases"/>
    <property type="match status" value="1"/>
</dbReference>
<accession>Q2N843</accession>
<proteinExistence type="inferred from homology"/>
<reference key="1">
    <citation type="journal article" date="2009" name="J. Bacteriol.">
        <title>Complete genome sequence of Erythrobacter litoralis HTCC2594.</title>
        <authorList>
            <person name="Oh H.M."/>
            <person name="Giovannoni S.J."/>
            <person name="Ferriera S."/>
            <person name="Johnson J."/>
            <person name="Cho J.C."/>
        </authorList>
    </citation>
    <scope>NUCLEOTIDE SEQUENCE [LARGE SCALE GENOMIC DNA]</scope>
    <source>
        <strain>HTCC2594</strain>
    </source>
</reference>
<keyword id="KW-0963">Cytoplasm</keyword>
<keyword id="KW-0489">Methyltransferase</keyword>
<keyword id="KW-1185">Reference proteome</keyword>
<keyword id="KW-0698">rRNA processing</keyword>
<keyword id="KW-0949">S-adenosyl-L-methionine</keyword>
<keyword id="KW-0808">Transferase</keyword>